<dbReference type="EC" id="3.5.99.6"/>
<dbReference type="EMBL" id="L42023">
    <property type="protein sequence ID" value="AAC21813.1"/>
    <property type="molecule type" value="Genomic_DNA"/>
</dbReference>
<dbReference type="PIR" id="F64050">
    <property type="entry name" value="F64050"/>
</dbReference>
<dbReference type="RefSeq" id="NP_438310.1">
    <property type="nucleotide sequence ID" value="NC_000907.1"/>
</dbReference>
<dbReference type="SMR" id="P44538"/>
<dbReference type="STRING" id="71421.HI_0141"/>
<dbReference type="EnsemblBacteria" id="AAC21813">
    <property type="protein sequence ID" value="AAC21813"/>
    <property type="gene ID" value="HI_0141"/>
</dbReference>
<dbReference type="KEGG" id="hin:HI_0141"/>
<dbReference type="PATRIC" id="fig|71421.8.peg.143"/>
<dbReference type="eggNOG" id="COG0363">
    <property type="taxonomic scope" value="Bacteria"/>
</dbReference>
<dbReference type="HOGENOM" id="CLU_049611_0_1_6"/>
<dbReference type="OrthoDB" id="9791139at2"/>
<dbReference type="PhylomeDB" id="P44538"/>
<dbReference type="BioCyc" id="HINF71421:G1GJ1-153-MONOMER"/>
<dbReference type="UniPathway" id="UPA00629">
    <property type="reaction ID" value="UER00684"/>
</dbReference>
<dbReference type="Proteomes" id="UP000000579">
    <property type="component" value="Chromosome"/>
</dbReference>
<dbReference type="GO" id="GO:0005737">
    <property type="term" value="C:cytoplasm"/>
    <property type="evidence" value="ECO:0000318"/>
    <property type="project" value="GO_Central"/>
</dbReference>
<dbReference type="GO" id="GO:0004342">
    <property type="term" value="F:glucosamine-6-phosphate deaminase activity"/>
    <property type="evidence" value="ECO:0000318"/>
    <property type="project" value="GO_Central"/>
</dbReference>
<dbReference type="GO" id="GO:0042802">
    <property type="term" value="F:identical protein binding"/>
    <property type="evidence" value="ECO:0000318"/>
    <property type="project" value="GO_Central"/>
</dbReference>
<dbReference type="GO" id="GO:0005975">
    <property type="term" value="P:carbohydrate metabolic process"/>
    <property type="evidence" value="ECO:0007669"/>
    <property type="project" value="InterPro"/>
</dbReference>
<dbReference type="GO" id="GO:0006043">
    <property type="term" value="P:glucosamine catabolic process"/>
    <property type="evidence" value="ECO:0000318"/>
    <property type="project" value="GO_Central"/>
</dbReference>
<dbReference type="GO" id="GO:0006046">
    <property type="term" value="P:N-acetylglucosamine catabolic process"/>
    <property type="evidence" value="ECO:0000318"/>
    <property type="project" value="GO_Central"/>
</dbReference>
<dbReference type="GO" id="GO:0019262">
    <property type="term" value="P:N-acetylneuraminate catabolic process"/>
    <property type="evidence" value="ECO:0000318"/>
    <property type="project" value="GO_Central"/>
</dbReference>
<dbReference type="CDD" id="cd01399">
    <property type="entry name" value="GlcN6P_deaminase"/>
    <property type="match status" value="1"/>
</dbReference>
<dbReference type="FunFam" id="3.40.50.1360:FF:000002">
    <property type="entry name" value="Glucosamine-6-phosphate deaminase"/>
    <property type="match status" value="1"/>
</dbReference>
<dbReference type="Gene3D" id="3.40.50.1360">
    <property type="match status" value="1"/>
</dbReference>
<dbReference type="HAMAP" id="MF_01241">
    <property type="entry name" value="GlcN6P_deamin"/>
    <property type="match status" value="1"/>
</dbReference>
<dbReference type="InterPro" id="IPR006148">
    <property type="entry name" value="Glc/Gal-6P_isomerase"/>
</dbReference>
<dbReference type="InterPro" id="IPR004547">
    <property type="entry name" value="Glucosamine6P_isomerase"/>
</dbReference>
<dbReference type="InterPro" id="IPR018321">
    <property type="entry name" value="Glucosamine6P_isomerase_CS"/>
</dbReference>
<dbReference type="InterPro" id="IPR037171">
    <property type="entry name" value="NagB/RpiA_transferase-like"/>
</dbReference>
<dbReference type="NCBIfam" id="TIGR00502">
    <property type="entry name" value="nagB"/>
    <property type="match status" value="1"/>
</dbReference>
<dbReference type="PANTHER" id="PTHR11280">
    <property type="entry name" value="GLUCOSAMINE-6-PHOSPHATE ISOMERASE"/>
    <property type="match status" value="1"/>
</dbReference>
<dbReference type="PANTHER" id="PTHR11280:SF5">
    <property type="entry name" value="GLUCOSAMINE-6-PHOSPHATE ISOMERASE"/>
    <property type="match status" value="1"/>
</dbReference>
<dbReference type="Pfam" id="PF01182">
    <property type="entry name" value="Glucosamine_iso"/>
    <property type="match status" value="1"/>
</dbReference>
<dbReference type="SUPFAM" id="SSF100950">
    <property type="entry name" value="NagB/RpiA/CoA transferase-like"/>
    <property type="match status" value="1"/>
</dbReference>
<dbReference type="PROSITE" id="PS01161">
    <property type="entry name" value="GLC_GALNAC_ISOMERASE"/>
    <property type="match status" value="1"/>
</dbReference>
<name>NAGB_HAEIN</name>
<accession>P44538</accession>
<proteinExistence type="inferred from homology"/>
<organism>
    <name type="scientific">Haemophilus influenzae (strain ATCC 51907 / DSM 11121 / KW20 / Rd)</name>
    <dbReference type="NCBI Taxonomy" id="71421"/>
    <lineage>
        <taxon>Bacteria</taxon>
        <taxon>Pseudomonadati</taxon>
        <taxon>Pseudomonadota</taxon>
        <taxon>Gammaproteobacteria</taxon>
        <taxon>Pasteurellales</taxon>
        <taxon>Pasteurellaceae</taxon>
        <taxon>Haemophilus</taxon>
    </lineage>
</organism>
<protein>
    <recommendedName>
        <fullName>Glucosamine-6-phosphate deaminase</fullName>
        <ecNumber>3.5.99.6</ecNumber>
    </recommendedName>
    <alternativeName>
        <fullName>GlcN6P deaminase</fullName>
        <shortName>GNPDA</shortName>
    </alternativeName>
    <alternativeName>
        <fullName>Glucosamine-6-phosphate isomerase</fullName>
    </alternativeName>
</protein>
<reference key="1">
    <citation type="journal article" date="1995" name="Science">
        <title>Whole-genome random sequencing and assembly of Haemophilus influenzae Rd.</title>
        <authorList>
            <person name="Fleischmann R.D."/>
            <person name="Adams M.D."/>
            <person name="White O."/>
            <person name="Clayton R.A."/>
            <person name="Kirkness E.F."/>
            <person name="Kerlavage A.R."/>
            <person name="Bult C.J."/>
            <person name="Tomb J.-F."/>
            <person name="Dougherty B.A."/>
            <person name="Merrick J.M."/>
            <person name="McKenney K."/>
            <person name="Sutton G.G."/>
            <person name="FitzHugh W."/>
            <person name="Fields C.A."/>
            <person name="Gocayne J.D."/>
            <person name="Scott J.D."/>
            <person name="Shirley R."/>
            <person name="Liu L.-I."/>
            <person name="Glodek A."/>
            <person name="Kelley J.M."/>
            <person name="Weidman J.F."/>
            <person name="Phillips C.A."/>
            <person name="Spriggs T."/>
            <person name="Hedblom E."/>
            <person name="Cotton M.D."/>
            <person name="Utterback T.R."/>
            <person name="Hanna M.C."/>
            <person name="Nguyen D.T."/>
            <person name="Saudek D.M."/>
            <person name="Brandon R.C."/>
            <person name="Fine L.D."/>
            <person name="Fritchman J.L."/>
            <person name="Fuhrmann J.L."/>
            <person name="Geoghagen N.S.M."/>
            <person name="Gnehm C.L."/>
            <person name="McDonald L.A."/>
            <person name="Small K.V."/>
            <person name="Fraser C.M."/>
            <person name="Smith H.O."/>
            <person name="Venter J.C."/>
        </authorList>
    </citation>
    <scope>NUCLEOTIDE SEQUENCE [LARGE SCALE GENOMIC DNA]</scope>
    <source>
        <strain>ATCC 51907 / DSM 11121 / KW20 / Rd</strain>
    </source>
</reference>
<gene>
    <name type="primary">nagB</name>
    <name type="ordered locus">HI_0141</name>
</gene>
<feature type="chain" id="PRO_0000160149" description="Glucosamine-6-phosphate deaminase">
    <location>
        <begin position="1"/>
        <end position="270"/>
    </location>
</feature>
<feature type="active site" description="Proton acceptor; for enolization step" evidence="1">
    <location>
        <position position="72"/>
    </location>
</feature>
<feature type="active site" description="For ring-opening step" evidence="1">
    <location>
        <position position="141"/>
    </location>
</feature>
<feature type="active site" description="Proton acceptor; for ring-opening step" evidence="1">
    <location>
        <position position="143"/>
    </location>
</feature>
<feature type="active site" description="For ring-opening step" evidence="1">
    <location>
        <position position="148"/>
    </location>
</feature>
<feature type="site" description="Part of the allosteric site" evidence="1">
    <location>
        <position position="151"/>
    </location>
</feature>
<feature type="site" description="Part of the allosteric site" evidence="1">
    <location>
        <position position="158"/>
    </location>
</feature>
<feature type="site" description="Part of the allosteric site" evidence="1">
    <location>
        <position position="160"/>
    </location>
</feature>
<feature type="site" description="Part of the allosteric site" evidence="1">
    <location>
        <position position="161"/>
    </location>
</feature>
<feature type="site" description="Part of the allosteric site" evidence="1">
    <location>
        <position position="254"/>
    </location>
</feature>
<keyword id="KW-0021">Allosteric enzyme</keyword>
<keyword id="KW-0119">Carbohydrate metabolism</keyword>
<keyword id="KW-0378">Hydrolase</keyword>
<keyword id="KW-1185">Reference proteome</keyword>
<sequence>MRFIPLQTEQQVSCWAAQHIINRINDFKPTAERPFVLGLPTGGTPLKTYQELIRLYQAGKVSFKHVVTFNMDEYVALPEEHPESYHSFMYNNFFNHIDILPENINILNGNTDDHNAECRRYEEKIKSYGKIHLFMGGVGVDGHIAFNEPASSLSSRTRIKTLTQDTLIANSRFFNNDVTQVPKYALTIGVGTLLDAEEVMILATGHQKALAVQAAVEGSINHLWTVSALQMHRHFLLVCDEAAQQELKVKTVKYFTELEGAVAGTDYQDK</sequence>
<evidence type="ECO:0000250" key="1"/>
<evidence type="ECO:0000305" key="2"/>
<comment type="function">
    <text evidence="1">Catalyzes the reversible isomerization-deamination of glucosamine 6-phosphate (GlcN6P) to form fructose 6-phosphate (Fru6P) and ammonium ion.</text>
</comment>
<comment type="catalytic activity">
    <reaction>
        <text>alpha-D-glucosamine 6-phosphate + H2O = beta-D-fructose 6-phosphate + NH4(+)</text>
        <dbReference type="Rhea" id="RHEA:12172"/>
        <dbReference type="ChEBI" id="CHEBI:15377"/>
        <dbReference type="ChEBI" id="CHEBI:28938"/>
        <dbReference type="ChEBI" id="CHEBI:57634"/>
        <dbReference type="ChEBI" id="CHEBI:75989"/>
        <dbReference type="EC" id="3.5.99.6"/>
    </reaction>
</comment>
<comment type="activity regulation">
    <text evidence="1">Allosterically activated by N-acetylglucosamine 6-phosphate (GlcNAc6P).</text>
</comment>
<comment type="pathway">
    <text>Amino-sugar metabolism; N-acetylneuraminate degradation; D-fructose 6-phosphate from N-acetylneuraminate: step 5/5.</text>
</comment>
<comment type="subunit">
    <text evidence="1">Homohexamer.</text>
</comment>
<comment type="similarity">
    <text evidence="2">Belongs to the glucosamine/galactosamine-6-phosphate isomerase family. NagB subfamily.</text>
</comment>